<sequence>MTQVFQGRSFLAEKDFTREEFEYLIDFAAHLKDLKKRGIPHHYLEGKNIALLFEKTSTRTRAAFTTAAIDLGAHPEYLGANDIQLGKKESTEDTAKVLGRMFDGIEFRGFSQRMVEELAEFSGVPVWNGLTDEWHPTQMLADYLTVKENFGKLEGLTLVYCGDGRNNVANSLLVAGTLLGVNVHIFSPKELFPAEDIVKLAEGYAKASGAHVLVTDNADEAVKGADVLYTDVWVSMGEEDKFEERVKLLKPYQVNMELVKKADNDNLIFLHCLPAFHDTNTVYGKDVAEKFGVEEMEVTDEVFRSKYARHFDQAENRMHTIKAVMAATLGNLFIPKV</sequence>
<reference key="1">
    <citation type="journal article" date="2008" name="PLoS ONE">
        <title>Genome sequence of a lancefield group C Streptococcus zooepidemicus strain causing epidemic nephritis: new information about an old disease.</title>
        <authorList>
            <person name="Beres S.B."/>
            <person name="Sesso R."/>
            <person name="Pinto S.W.L."/>
            <person name="Hoe N.P."/>
            <person name="Porcella S.F."/>
            <person name="Deleo F.R."/>
            <person name="Musser J.M."/>
        </authorList>
    </citation>
    <scope>NUCLEOTIDE SEQUENCE [LARGE SCALE GENOMIC DNA]</scope>
    <source>
        <strain>MGCS10565</strain>
    </source>
</reference>
<organism>
    <name type="scientific">Streptococcus equi subsp. zooepidemicus (strain MGCS10565)</name>
    <dbReference type="NCBI Taxonomy" id="552526"/>
    <lineage>
        <taxon>Bacteria</taxon>
        <taxon>Bacillati</taxon>
        <taxon>Bacillota</taxon>
        <taxon>Bacilli</taxon>
        <taxon>Lactobacillales</taxon>
        <taxon>Streptococcaceae</taxon>
        <taxon>Streptococcus</taxon>
    </lineage>
</organism>
<accession>B4U1S2</accession>
<keyword id="KW-0056">Arginine metabolism</keyword>
<keyword id="KW-0963">Cytoplasm</keyword>
<keyword id="KW-0808">Transferase</keyword>
<name>OTC_STREM</name>
<gene>
    <name evidence="2" type="primary">arcB</name>
    <name type="ordered locus">Sez_0570</name>
</gene>
<feature type="chain" id="PRO_1000137104" description="Ornithine carbamoyltransferase">
    <location>
        <begin position="1"/>
        <end position="337"/>
    </location>
</feature>
<feature type="binding site" evidence="2">
    <location>
        <begin position="57"/>
        <end position="60"/>
    </location>
    <ligand>
        <name>carbamoyl phosphate</name>
        <dbReference type="ChEBI" id="CHEBI:58228"/>
    </ligand>
</feature>
<feature type="binding site" evidence="2">
    <location>
        <position position="84"/>
    </location>
    <ligand>
        <name>carbamoyl phosphate</name>
        <dbReference type="ChEBI" id="CHEBI:58228"/>
    </ligand>
</feature>
<feature type="binding site" evidence="2">
    <location>
        <position position="108"/>
    </location>
    <ligand>
        <name>carbamoyl phosphate</name>
        <dbReference type="ChEBI" id="CHEBI:58228"/>
    </ligand>
</feature>
<feature type="binding site" evidence="2">
    <location>
        <begin position="135"/>
        <end position="138"/>
    </location>
    <ligand>
        <name>carbamoyl phosphate</name>
        <dbReference type="ChEBI" id="CHEBI:58228"/>
    </ligand>
</feature>
<feature type="binding site" evidence="2">
    <location>
        <position position="167"/>
    </location>
    <ligand>
        <name>L-ornithine</name>
        <dbReference type="ChEBI" id="CHEBI:46911"/>
    </ligand>
</feature>
<feature type="binding site" evidence="2">
    <location>
        <position position="231"/>
    </location>
    <ligand>
        <name>L-ornithine</name>
        <dbReference type="ChEBI" id="CHEBI:46911"/>
    </ligand>
</feature>
<feature type="binding site" evidence="2">
    <location>
        <begin position="235"/>
        <end position="236"/>
    </location>
    <ligand>
        <name>L-ornithine</name>
        <dbReference type="ChEBI" id="CHEBI:46911"/>
    </ligand>
</feature>
<feature type="binding site" evidence="2">
    <location>
        <begin position="272"/>
        <end position="273"/>
    </location>
    <ligand>
        <name>carbamoyl phosphate</name>
        <dbReference type="ChEBI" id="CHEBI:58228"/>
    </ligand>
</feature>
<feature type="binding site" evidence="2">
    <location>
        <position position="317"/>
    </location>
    <ligand>
        <name>carbamoyl phosphate</name>
        <dbReference type="ChEBI" id="CHEBI:58228"/>
    </ligand>
</feature>
<proteinExistence type="inferred from homology"/>
<protein>
    <recommendedName>
        <fullName evidence="2">Ornithine carbamoyltransferase</fullName>
        <shortName evidence="2">OTCase</shortName>
        <ecNumber evidence="2">2.1.3.3</ecNumber>
    </recommendedName>
</protein>
<comment type="function">
    <text evidence="1">Reversibly catalyzes the transfer of the carbamoyl group from carbamoyl phosphate (CP) to the N(epsilon) atom of ornithine (ORN) to produce L-citrulline.</text>
</comment>
<comment type="catalytic activity">
    <reaction evidence="2">
        <text>carbamoyl phosphate + L-ornithine = L-citrulline + phosphate + H(+)</text>
        <dbReference type="Rhea" id="RHEA:19513"/>
        <dbReference type="ChEBI" id="CHEBI:15378"/>
        <dbReference type="ChEBI" id="CHEBI:43474"/>
        <dbReference type="ChEBI" id="CHEBI:46911"/>
        <dbReference type="ChEBI" id="CHEBI:57743"/>
        <dbReference type="ChEBI" id="CHEBI:58228"/>
        <dbReference type="EC" id="2.1.3.3"/>
    </reaction>
</comment>
<comment type="pathway">
    <text evidence="2">Amino-acid degradation; L-arginine degradation via ADI pathway; carbamoyl phosphate from L-arginine: step 2/2.</text>
</comment>
<comment type="subcellular location">
    <subcellularLocation>
        <location evidence="2">Cytoplasm</location>
    </subcellularLocation>
</comment>
<comment type="similarity">
    <text evidence="2">Belongs to the aspartate/ornithine carbamoyltransferase superfamily. OTCase family.</text>
</comment>
<evidence type="ECO:0000250" key="1"/>
<evidence type="ECO:0000255" key="2">
    <source>
        <dbReference type="HAMAP-Rule" id="MF_01109"/>
    </source>
</evidence>
<dbReference type="EC" id="2.1.3.3" evidence="2"/>
<dbReference type="EMBL" id="CP001129">
    <property type="protein sequence ID" value="ACG61939.1"/>
    <property type="molecule type" value="Genomic_DNA"/>
</dbReference>
<dbReference type="SMR" id="B4U1S2"/>
<dbReference type="KEGG" id="sez:Sez_0570"/>
<dbReference type="HOGENOM" id="CLU_043846_3_1_9"/>
<dbReference type="UniPathway" id="UPA00254">
    <property type="reaction ID" value="UER00365"/>
</dbReference>
<dbReference type="Proteomes" id="UP000001873">
    <property type="component" value="Chromosome"/>
</dbReference>
<dbReference type="GO" id="GO:0005737">
    <property type="term" value="C:cytoplasm"/>
    <property type="evidence" value="ECO:0007669"/>
    <property type="project" value="UniProtKB-SubCell"/>
</dbReference>
<dbReference type="GO" id="GO:0016597">
    <property type="term" value="F:amino acid binding"/>
    <property type="evidence" value="ECO:0007669"/>
    <property type="project" value="InterPro"/>
</dbReference>
<dbReference type="GO" id="GO:0004585">
    <property type="term" value="F:ornithine carbamoyltransferase activity"/>
    <property type="evidence" value="ECO:0007669"/>
    <property type="project" value="UniProtKB-UniRule"/>
</dbReference>
<dbReference type="GO" id="GO:0042450">
    <property type="term" value="P:arginine biosynthetic process via ornithine"/>
    <property type="evidence" value="ECO:0007669"/>
    <property type="project" value="TreeGrafter"/>
</dbReference>
<dbReference type="GO" id="GO:0019547">
    <property type="term" value="P:arginine catabolic process to ornithine"/>
    <property type="evidence" value="ECO:0007669"/>
    <property type="project" value="UniProtKB-UniRule"/>
</dbReference>
<dbReference type="GO" id="GO:0019240">
    <property type="term" value="P:citrulline biosynthetic process"/>
    <property type="evidence" value="ECO:0007669"/>
    <property type="project" value="TreeGrafter"/>
</dbReference>
<dbReference type="FunFam" id="3.40.50.1370:FF:000004">
    <property type="entry name" value="Ornithine carbamoyltransferase"/>
    <property type="match status" value="1"/>
</dbReference>
<dbReference type="Gene3D" id="3.40.50.1370">
    <property type="entry name" value="Aspartate/ornithine carbamoyltransferase"/>
    <property type="match status" value="2"/>
</dbReference>
<dbReference type="HAMAP" id="MF_01109">
    <property type="entry name" value="OTCase"/>
    <property type="match status" value="1"/>
</dbReference>
<dbReference type="InterPro" id="IPR006132">
    <property type="entry name" value="Asp/Orn_carbamoyltranf_P-bd"/>
</dbReference>
<dbReference type="InterPro" id="IPR006130">
    <property type="entry name" value="Asp/Orn_carbamoylTrfase"/>
</dbReference>
<dbReference type="InterPro" id="IPR036901">
    <property type="entry name" value="Asp/Orn_carbamoylTrfase_sf"/>
</dbReference>
<dbReference type="InterPro" id="IPR006131">
    <property type="entry name" value="Asp_carbamoyltransf_Asp/Orn-bd"/>
</dbReference>
<dbReference type="InterPro" id="IPR002292">
    <property type="entry name" value="Orn/put_carbamltrans"/>
</dbReference>
<dbReference type="InterPro" id="IPR024904">
    <property type="entry name" value="OTCase_ArgI"/>
</dbReference>
<dbReference type="NCBIfam" id="TIGR00658">
    <property type="entry name" value="orni_carb_tr"/>
    <property type="match status" value="1"/>
</dbReference>
<dbReference type="NCBIfam" id="NF001986">
    <property type="entry name" value="PRK00779.1"/>
    <property type="match status" value="1"/>
</dbReference>
<dbReference type="PANTHER" id="PTHR45753:SF1">
    <property type="entry name" value="ORNITHINE CARBAMOYLTRANSFERASE, CATABOLIC"/>
    <property type="match status" value="1"/>
</dbReference>
<dbReference type="PANTHER" id="PTHR45753">
    <property type="entry name" value="ORNITHINE CARBAMOYLTRANSFERASE, MITOCHONDRIAL"/>
    <property type="match status" value="1"/>
</dbReference>
<dbReference type="Pfam" id="PF00185">
    <property type="entry name" value="OTCace"/>
    <property type="match status" value="1"/>
</dbReference>
<dbReference type="Pfam" id="PF02729">
    <property type="entry name" value="OTCace_N"/>
    <property type="match status" value="1"/>
</dbReference>
<dbReference type="PRINTS" id="PR00100">
    <property type="entry name" value="AOTCASE"/>
</dbReference>
<dbReference type="PRINTS" id="PR00102">
    <property type="entry name" value="OTCASE"/>
</dbReference>
<dbReference type="SUPFAM" id="SSF53671">
    <property type="entry name" value="Aspartate/ornithine carbamoyltransferase"/>
    <property type="match status" value="1"/>
</dbReference>
<dbReference type="PROSITE" id="PS00097">
    <property type="entry name" value="CARBAMOYLTRANSFERASE"/>
    <property type="match status" value="1"/>
</dbReference>